<sequence>MLKKPIIIGVTGGSGGGKTSVSRAILNSFPNARIAMIQHDSYYKDQSHISFEERVKTNYDHPLAFDTDFMIQQLKELLAGRPVDIPIYDYKEHTRSNRTFRQEPQDVIIVEGILVLEDERLRELMDIKLFVDTDDDIRIIRRIQRDMVERGRSLESIIEQYTSVVKPMYHQFIEPSKRYADIVIPEGVSNVVAIDLINTKIASILGEL</sequence>
<reference key="1">
    <citation type="journal article" date="2008" name="PLoS ONE">
        <title>Genome sequence of a lancefield group C Streptococcus zooepidemicus strain causing epidemic nephritis: new information about an old disease.</title>
        <authorList>
            <person name="Beres S.B."/>
            <person name="Sesso R."/>
            <person name="Pinto S.W.L."/>
            <person name="Hoe N.P."/>
            <person name="Porcella S.F."/>
            <person name="Deleo F.R."/>
            <person name="Musser J.M."/>
        </authorList>
    </citation>
    <scope>NUCLEOTIDE SEQUENCE [LARGE SCALE GENOMIC DNA]</scope>
    <source>
        <strain>MGCS10565</strain>
    </source>
</reference>
<name>URK_STREM</name>
<dbReference type="EC" id="2.7.1.48" evidence="1"/>
<dbReference type="EMBL" id="CP001129">
    <property type="protein sequence ID" value="ACG62037.1"/>
    <property type="molecule type" value="Genomic_DNA"/>
</dbReference>
<dbReference type="RefSeq" id="WP_012515313.1">
    <property type="nucleotide sequence ID" value="NC_011134.1"/>
</dbReference>
<dbReference type="SMR" id="B4U220"/>
<dbReference type="GeneID" id="83704516"/>
<dbReference type="KEGG" id="sez:Sez_0672"/>
<dbReference type="HOGENOM" id="CLU_021278_1_2_9"/>
<dbReference type="UniPathway" id="UPA00574">
    <property type="reaction ID" value="UER00637"/>
</dbReference>
<dbReference type="UniPathway" id="UPA00579">
    <property type="reaction ID" value="UER00640"/>
</dbReference>
<dbReference type="Proteomes" id="UP000001873">
    <property type="component" value="Chromosome"/>
</dbReference>
<dbReference type="GO" id="GO:0005737">
    <property type="term" value="C:cytoplasm"/>
    <property type="evidence" value="ECO:0007669"/>
    <property type="project" value="UniProtKB-SubCell"/>
</dbReference>
<dbReference type="GO" id="GO:0005524">
    <property type="term" value="F:ATP binding"/>
    <property type="evidence" value="ECO:0007669"/>
    <property type="project" value="UniProtKB-UniRule"/>
</dbReference>
<dbReference type="GO" id="GO:0043771">
    <property type="term" value="F:cytidine kinase activity"/>
    <property type="evidence" value="ECO:0007669"/>
    <property type="project" value="RHEA"/>
</dbReference>
<dbReference type="GO" id="GO:0004849">
    <property type="term" value="F:uridine kinase activity"/>
    <property type="evidence" value="ECO:0007669"/>
    <property type="project" value="UniProtKB-UniRule"/>
</dbReference>
<dbReference type="GO" id="GO:0044211">
    <property type="term" value="P:CTP salvage"/>
    <property type="evidence" value="ECO:0007669"/>
    <property type="project" value="UniProtKB-UniRule"/>
</dbReference>
<dbReference type="GO" id="GO:0044206">
    <property type="term" value="P:UMP salvage"/>
    <property type="evidence" value="ECO:0007669"/>
    <property type="project" value="UniProtKB-UniRule"/>
</dbReference>
<dbReference type="CDD" id="cd02023">
    <property type="entry name" value="UMPK"/>
    <property type="match status" value="1"/>
</dbReference>
<dbReference type="Gene3D" id="3.40.50.300">
    <property type="entry name" value="P-loop containing nucleotide triphosphate hydrolases"/>
    <property type="match status" value="1"/>
</dbReference>
<dbReference type="HAMAP" id="MF_00551">
    <property type="entry name" value="Uridine_kinase"/>
    <property type="match status" value="1"/>
</dbReference>
<dbReference type="InterPro" id="IPR027417">
    <property type="entry name" value="P-loop_NTPase"/>
</dbReference>
<dbReference type="InterPro" id="IPR006083">
    <property type="entry name" value="PRK/URK"/>
</dbReference>
<dbReference type="InterPro" id="IPR026008">
    <property type="entry name" value="Uridine_kinase"/>
</dbReference>
<dbReference type="InterPro" id="IPR000764">
    <property type="entry name" value="Uridine_kinase-like"/>
</dbReference>
<dbReference type="NCBIfam" id="NF004018">
    <property type="entry name" value="PRK05480.1"/>
    <property type="match status" value="1"/>
</dbReference>
<dbReference type="NCBIfam" id="TIGR00235">
    <property type="entry name" value="udk"/>
    <property type="match status" value="1"/>
</dbReference>
<dbReference type="PANTHER" id="PTHR10285">
    <property type="entry name" value="URIDINE KINASE"/>
    <property type="match status" value="1"/>
</dbReference>
<dbReference type="Pfam" id="PF00485">
    <property type="entry name" value="PRK"/>
    <property type="match status" value="1"/>
</dbReference>
<dbReference type="PRINTS" id="PR00988">
    <property type="entry name" value="URIDINKINASE"/>
</dbReference>
<dbReference type="SUPFAM" id="SSF52540">
    <property type="entry name" value="P-loop containing nucleoside triphosphate hydrolases"/>
    <property type="match status" value="1"/>
</dbReference>
<comment type="catalytic activity">
    <reaction evidence="1">
        <text>uridine + ATP = UMP + ADP + H(+)</text>
        <dbReference type="Rhea" id="RHEA:16825"/>
        <dbReference type="ChEBI" id="CHEBI:15378"/>
        <dbReference type="ChEBI" id="CHEBI:16704"/>
        <dbReference type="ChEBI" id="CHEBI:30616"/>
        <dbReference type="ChEBI" id="CHEBI:57865"/>
        <dbReference type="ChEBI" id="CHEBI:456216"/>
        <dbReference type="EC" id="2.7.1.48"/>
    </reaction>
</comment>
<comment type="catalytic activity">
    <reaction evidence="1">
        <text>cytidine + ATP = CMP + ADP + H(+)</text>
        <dbReference type="Rhea" id="RHEA:24674"/>
        <dbReference type="ChEBI" id="CHEBI:15378"/>
        <dbReference type="ChEBI" id="CHEBI:17562"/>
        <dbReference type="ChEBI" id="CHEBI:30616"/>
        <dbReference type="ChEBI" id="CHEBI:60377"/>
        <dbReference type="ChEBI" id="CHEBI:456216"/>
        <dbReference type="EC" id="2.7.1.48"/>
    </reaction>
</comment>
<comment type="pathway">
    <text evidence="1">Pyrimidine metabolism; CTP biosynthesis via salvage pathway; CTP from cytidine: step 1/3.</text>
</comment>
<comment type="pathway">
    <text evidence="1">Pyrimidine metabolism; UMP biosynthesis via salvage pathway; UMP from uridine: step 1/1.</text>
</comment>
<comment type="subcellular location">
    <subcellularLocation>
        <location evidence="1">Cytoplasm</location>
    </subcellularLocation>
</comment>
<comment type="similarity">
    <text evidence="1">Belongs to the uridine kinase family.</text>
</comment>
<gene>
    <name evidence="1" type="primary">udk</name>
    <name type="ordered locus">Sez_0672</name>
</gene>
<evidence type="ECO:0000255" key="1">
    <source>
        <dbReference type="HAMAP-Rule" id="MF_00551"/>
    </source>
</evidence>
<organism>
    <name type="scientific">Streptococcus equi subsp. zooepidemicus (strain MGCS10565)</name>
    <dbReference type="NCBI Taxonomy" id="552526"/>
    <lineage>
        <taxon>Bacteria</taxon>
        <taxon>Bacillati</taxon>
        <taxon>Bacillota</taxon>
        <taxon>Bacilli</taxon>
        <taxon>Lactobacillales</taxon>
        <taxon>Streptococcaceae</taxon>
        <taxon>Streptococcus</taxon>
    </lineage>
</organism>
<proteinExistence type="inferred from homology"/>
<protein>
    <recommendedName>
        <fullName evidence="1">Uridine kinase</fullName>
        <ecNumber evidence="1">2.7.1.48</ecNumber>
    </recommendedName>
    <alternativeName>
        <fullName evidence="1">Cytidine monophosphokinase</fullName>
    </alternativeName>
    <alternativeName>
        <fullName evidence="1">Uridine monophosphokinase</fullName>
    </alternativeName>
</protein>
<feature type="chain" id="PRO_1000129090" description="Uridine kinase">
    <location>
        <begin position="1"/>
        <end position="208"/>
    </location>
</feature>
<feature type="binding site" evidence="1">
    <location>
        <begin position="12"/>
        <end position="19"/>
    </location>
    <ligand>
        <name>ATP</name>
        <dbReference type="ChEBI" id="CHEBI:30616"/>
    </ligand>
</feature>
<accession>B4U220</accession>
<keyword id="KW-0067">ATP-binding</keyword>
<keyword id="KW-0963">Cytoplasm</keyword>
<keyword id="KW-0418">Kinase</keyword>
<keyword id="KW-0547">Nucleotide-binding</keyword>
<keyword id="KW-0808">Transferase</keyword>